<feature type="chain" id="PRO_0000321680" description="Rhomboid protease GlpG">
    <location>
        <begin position="1"/>
        <end position="276"/>
    </location>
</feature>
<feature type="transmembrane region" description="Helical" evidence="1">
    <location>
        <begin position="94"/>
        <end position="114"/>
    </location>
</feature>
<feature type="transmembrane region" description="Helical" evidence="1">
    <location>
        <begin position="142"/>
        <end position="162"/>
    </location>
</feature>
<feature type="transmembrane region" description="Helical" evidence="1">
    <location>
        <begin position="169"/>
        <end position="189"/>
    </location>
</feature>
<feature type="transmembrane region" description="Helical" evidence="1">
    <location>
        <begin position="192"/>
        <end position="212"/>
    </location>
</feature>
<feature type="transmembrane region" description="Helical" evidence="1">
    <location>
        <begin position="229"/>
        <end position="249"/>
    </location>
</feature>
<feature type="transmembrane region" description="Helical" evidence="1">
    <location>
        <begin position="250"/>
        <end position="270"/>
    </location>
</feature>
<feature type="active site" description="Nucleophile" evidence="1">
    <location>
        <position position="201"/>
    </location>
</feature>
<feature type="active site" evidence="1">
    <location>
        <position position="254"/>
    </location>
</feature>
<accession>A7ZSV4</accession>
<name>GLPG_ECO24</name>
<protein>
    <recommendedName>
        <fullName evidence="1">Rhomboid protease GlpG</fullName>
        <ecNumber evidence="1">3.4.21.105</ecNumber>
    </recommendedName>
    <alternativeName>
        <fullName evidence="1">Intramembrane serine protease</fullName>
    </alternativeName>
</protein>
<evidence type="ECO:0000255" key="1">
    <source>
        <dbReference type="HAMAP-Rule" id="MF_01594"/>
    </source>
</evidence>
<gene>
    <name evidence="1" type="primary">glpG</name>
    <name type="ordered locus">EcE24377A_3900</name>
</gene>
<dbReference type="EC" id="3.4.21.105" evidence="1"/>
<dbReference type="EMBL" id="CP000800">
    <property type="protein sequence ID" value="ABV17984.1"/>
    <property type="molecule type" value="Genomic_DNA"/>
</dbReference>
<dbReference type="RefSeq" id="WP_000928731.1">
    <property type="nucleotide sequence ID" value="NC_009801.1"/>
</dbReference>
<dbReference type="BMRB" id="A7ZSV4"/>
<dbReference type="SMR" id="A7ZSV4"/>
<dbReference type="MEROPS" id="S54.016"/>
<dbReference type="GeneID" id="75202266"/>
<dbReference type="KEGG" id="ecw:EcE24377A_3900"/>
<dbReference type="HOGENOM" id="CLU_058989_0_0_6"/>
<dbReference type="Proteomes" id="UP000001122">
    <property type="component" value="Chromosome"/>
</dbReference>
<dbReference type="GO" id="GO:0005886">
    <property type="term" value="C:plasma membrane"/>
    <property type="evidence" value="ECO:0007669"/>
    <property type="project" value="UniProtKB-SubCell"/>
</dbReference>
<dbReference type="GO" id="GO:0004252">
    <property type="term" value="F:serine-type endopeptidase activity"/>
    <property type="evidence" value="ECO:0007669"/>
    <property type="project" value="UniProtKB-UniRule"/>
</dbReference>
<dbReference type="GO" id="GO:0006508">
    <property type="term" value="P:proteolysis"/>
    <property type="evidence" value="ECO:0007669"/>
    <property type="project" value="UniProtKB-UniRule"/>
</dbReference>
<dbReference type="FunFam" id="1.20.1540.10:FF:000003">
    <property type="entry name" value="Rhomboid protease GlpG"/>
    <property type="match status" value="1"/>
</dbReference>
<dbReference type="FunFam" id="3.30.70.2350:FF:000001">
    <property type="entry name" value="Rhomboid protease GlpG"/>
    <property type="match status" value="1"/>
</dbReference>
<dbReference type="Gene3D" id="3.30.70.2350">
    <property type="match status" value="1"/>
</dbReference>
<dbReference type="Gene3D" id="1.20.1540.10">
    <property type="entry name" value="Rhomboid-like"/>
    <property type="match status" value="1"/>
</dbReference>
<dbReference type="HAMAP" id="MF_01594">
    <property type="entry name" value="Rhomboid_GlpG"/>
    <property type="match status" value="1"/>
</dbReference>
<dbReference type="InterPro" id="IPR038236">
    <property type="entry name" value="GlpG_N_sf"/>
</dbReference>
<dbReference type="InterPro" id="IPR022732">
    <property type="entry name" value="Peptidase_S54_GlpG_N"/>
</dbReference>
<dbReference type="InterPro" id="IPR022764">
    <property type="entry name" value="Peptidase_S54_rhomboid_dom"/>
</dbReference>
<dbReference type="InterPro" id="IPR035952">
    <property type="entry name" value="Rhomboid-like_sf"/>
</dbReference>
<dbReference type="InterPro" id="IPR023662">
    <property type="entry name" value="Rhomboid_protease_GlpG"/>
</dbReference>
<dbReference type="NCBIfam" id="NF008155">
    <property type="entry name" value="PRK10907.1"/>
    <property type="match status" value="1"/>
</dbReference>
<dbReference type="NCBIfam" id="TIGR04239">
    <property type="entry name" value="rhombo_GlpG"/>
    <property type="match status" value="1"/>
</dbReference>
<dbReference type="PANTHER" id="PTHR43066:SF26">
    <property type="entry name" value="RHOMBOID PROTEASE GLPG"/>
    <property type="match status" value="1"/>
</dbReference>
<dbReference type="PANTHER" id="PTHR43066">
    <property type="entry name" value="RHOMBOID-RELATED PROTEIN"/>
    <property type="match status" value="1"/>
</dbReference>
<dbReference type="Pfam" id="PF01694">
    <property type="entry name" value="Rhomboid"/>
    <property type="match status" value="1"/>
</dbReference>
<dbReference type="Pfam" id="PF12122">
    <property type="entry name" value="Rhomboid_N"/>
    <property type="match status" value="1"/>
</dbReference>
<dbReference type="SUPFAM" id="SSF144091">
    <property type="entry name" value="Rhomboid-like"/>
    <property type="match status" value="1"/>
</dbReference>
<comment type="function">
    <text evidence="1">Rhomboid-type serine protease that catalyzes intramembrane proteolysis.</text>
</comment>
<comment type="catalytic activity">
    <reaction evidence="1">
        <text>Cleaves type-1 transmembrane domains using a catalytic dyad composed of serine and histidine that are contributed by different transmembrane domains.</text>
        <dbReference type="EC" id="3.4.21.105"/>
    </reaction>
</comment>
<comment type="subcellular location">
    <subcellularLocation>
        <location evidence="1">Cell inner membrane</location>
        <topology evidence="1">Multi-pass membrane protein</topology>
    </subcellularLocation>
</comment>
<comment type="similarity">
    <text evidence="1">Belongs to the peptidase S54 family.</text>
</comment>
<reference key="1">
    <citation type="journal article" date="2008" name="J. Bacteriol.">
        <title>The pangenome structure of Escherichia coli: comparative genomic analysis of E. coli commensal and pathogenic isolates.</title>
        <authorList>
            <person name="Rasko D.A."/>
            <person name="Rosovitz M.J."/>
            <person name="Myers G.S.A."/>
            <person name="Mongodin E.F."/>
            <person name="Fricke W.F."/>
            <person name="Gajer P."/>
            <person name="Crabtree J."/>
            <person name="Sebaihia M."/>
            <person name="Thomson N.R."/>
            <person name="Chaudhuri R."/>
            <person name="Henderson I.R."/>
            <person name="Sperandio V."/>
            <person name="Ravel J."/>
        </authorList>
    </citation>
    <scope>NUCLEOTIDE SEQUENCE [LARGE SCALE GENOMIC DNA]</scope>
    <source>
        <strain>E24377A / ETEC</strain>
    </source>
</reference>
<organism>
    <name type="scientific">Escherichia coli O139:H28 (strain E24377A / ETEC)</name>
    <dbReference type="NCBI Taxonomy" id="331111"/>
    <lineage>
        <taxon>Bacteria</taxon>
        <taxon>Pseudomonadati</taxon>
        <taxon>Pseudomonadota</taxon>
        <taxon>Gammaproteobacteria</taxon>
        <taxon>Enterobacterales</taxon>
        <taxon>Enterobacteriaceae</taxon>
        <taxon>Escherichia</taxon>
    </lineage>
</organism>
<sequence length="276" mass="31275">MLMITSFANPRVAQAFVDYMATQGVILTIQQHNQSDVWLADESQAERVRAELARFLENPADPRYLAASWQAGHTGSGLHYRRYPFFAALRERAGPVTWVVMIACVVVFIAMQILGDQEVMLWLAWPFDPTLKFEFWRYFTHALMHFSLMHILFNLLWWWYLGGAVEKRLGSGKLIVITLISALLSGYVQQKFSGPWFGGLSGVVYALMGYVWLRGERDPQSGIYLQRGLIIFALIWIVAGWFDLFGMSMANGAHIAGLAVGLAMAFVDSLNARKRK</sequence>
<keyword id="KW-0997">Cell inner membrane</keyword>
<keyword id="KW-1003">Cell membrane</keyword>
<keyword id="KW-0378">Hydrolase</keyword>
<keyword id="KW-0472">Membrane</keyword>
<keyword id="KW-0645">Protease</keyword>
<keyword id="KW-1185">Reference proteome</keyword>
<keyword id="KW-0720">Serine protease</keyword>
<keyword id="KW-0812">Transmembrane</keyword>
<keyword id="KW-1133">Transmembrane helix</keyword>
<proteinExistence type="inferred from homology"/>